<dbReference type="EC" id="6.1.1.17" evidence="1"/>
<dbReference type="EMBL" id="CR954253">
    <property type="protein sequence ID" value="CAI98474.1"/>
    <property type="molecule type" value="Genomic_DNA"/>
</dbReference>
<dbReference type="RefSeq" id="WP_011544146.1">
    <property type="nucleotide sequence ID" value="NC_008054.1"/>
</dbReference>
<dbReference type="SMR" id="Q1G8Y5"/>
<dbReference type="STRING" id="390333.Ldb1685"/>
<dbReference type="KEGG" id="ldb:Ldb1685"/>
<dbReference type="PATRIC" id="fig|390333.7.peg.1513"/>
<dbReference type="eggNOG" id="COG0008">
    <property type="taxonomic scope" value="Bacteria"/>
</dbReference>
<dbReference type="HOGENOM" id="CLU_015768_6_1_9"/>
<dbReference type="BioCyc" id="LDEL390333:LDB_RS07285-MONOMER"/>
<dbReference type="Proteomes" id="UP000001259">
    <property type="component" value="Chromosome"/>
</dbReference>
<dbReference type="GO" id="GO:0005829">
    <property type="term" value="C:cytosol"/>
    <property type="evidence" value="ECO:0007669"/>
    <property type="project" value="TreeGrafter"/>
</dbReference>
<dbReference type="GO" id="GO:0005524">
    <property type="term" value="F:ATP binding"/>
    <property type="evidence" value="ECO:0007669"/>
    <property type="project" value="UniProtKB-UniRule"/>
</dbReference>
<dbReference type="GO" id="GO:0004818">
    <property type="term" value="F:glutamate-tRNA ligase activity"/>
    <property type="evidence" value="ECO:0007669"/>
    <property type="project" value="UniProtKB-UniRule"/>
</dbReference>
<dbReference type="GO" id="GO:0000049">
    <property type="term" value="F:tRNA binding"/>
    <property type="evidence" value="ECO:0007669"/>
    <property type="project" value="InterPro"/>
</dbReference>
<dbReference type="GO" id="GO:0008270">
    <property type="term" value="F:zinc ion binding"/>
    <property type="evidence" value="ECO:0007669"/>
    <property type="project" value="InterPro"/>
</dbReference>
<dbReference type="GO" id="GO:0006424">
    <property type="term" value="P:glutamyl-tRNA aminoacylation"/>
    <property type="evidence" value="ECO:0007669"/>
    <property type="project" value="UniProtKB-UniRule"/>
</dbReference>
<dbReference type="CDD" id="cd00808">
    <property type="entry name" value="GluRS_core"/>
    <property type="match status" value="1"/>
</dbReference>
<dbReference type="FunFam" id="3.40.50.620:FF:000007">
    <property type="entry name" value="Glutamate--tRNA ligase"/>
    <property type="match status" value="1"/>
</dbReference>
<dbReference type="Gene3D" id="1.10.10.350">
    <property type="match status" value="1"/>
</dbReference>
<dbReference type="Gene3D" id="3.40.50.620">
    <property type="entry name" value="HUPs"/>
    <property type="match status" value="1"/>
</dbReference>
<dbReference type="HAMAP" id="MF_00022">
    <property type="entry name" value="Glu_tRNA_synth_type1"/>
    <property type="match status" value="1"/>
</dbReference>
<dbReference type="InterPro" id="IPR045462">
    <property type="entry name" value="aa-tRNA-synth_I_cd-bd"/>
</dbReference>
<dbReference type="InterPro" id="IPR020751">
    <property type="entry name" value="aa-tRNA-synth_I_codon-bd_sub2"/>
</dbReference>
<dbReference type="InterPro" id="IPR001412">
    <property type="entry name" value="aa-tRNA-synth_I_CS"/>
</dbReference>
<dbReference type="InterPro" id="IPR008925">
    <property type="entry name" value="aa_tRNA-synth_I_cd-bd_sf"/>
</dbReference>
<dbReference type="InterPro" id="IPR004527">
    <property type="entry name" value="Glu-tRNA-ligase_bac/mito"/>
</dbReference>
<dbReference type="InterPro" id="IPR000924">
    <property type="entry name" value="Glu/Gln-tRNA-synth"/>
</dbReference>
<dbReference type="InterPro" id="IPR020058">
    <property type="entry name" value="Glu/Gln-tRNA-synth_Ib_cat-dom"/>
</dbReference>
<dbReference type="InterPro" id="IPR049940">
    <property type="entry name" value="GluQ/Sye"/>
</dbReference>
<dbReference type="InterPro" id="IPR033910">
    <property type="entry name" value="GluRS_core"/>
</dbReference>
<dbReference type="InterPro" id="IPR014729">
    <property type="entry name" value="Rossmann-like_a/b/a_fold"/>
</dbReference>
<dbReference type="NCBIfam" id="TIGR00464">
    <property type="entry name" value="gltX_bact"/>
    <property type="match status" value="1"/>
</dbReference>
<dbReference type="PANTHER" id="PTHR43311">
    <property type="entry name" value="GLUTAMATE--TRNA LIGASE"/>
    <property type="match status" value="1"/>
</dbReference>
<dbReference type="PANTHER" id="PTHR43311:SF2">
    <property type="entry name" value="GLUTAMATE--TRNA LIGASE, MITOCHONDRIAL-RELATED"/>
    <property type="match status" value="1"/>
</dbReference>
<dbReference type="Pfam" id="PF19269">
    <property type="entry name" value="Anticodon_2"/>
    <property type="match status" value="1"/>
</dbReference>
<dbReference type="Pfam" id="PF00749">
    <property type="entry name" value="tRNA-synt_1c"/>
    <property type="match status" value="1"/>
</dbReference>
<dbReference type="PRINTS" id="PR00987">
    <property type="entry name" value="TRNASYNTHGLU"/>
</dbReference>
<dbReference type="SUPFAM" id="SSF48163">
    <property type="entry name" value="An anticodon-binding domain of class I aminoacyl-tRNA synthetases"/>
    <property type="match status" value="1"/>
</dbReference>
<dbReference type="SUPFAM" id="SSF52374">
    <property type="entry name" value="Nucleotidylyl transferase"/>
    <property type="match status" value="1"/>
</dbReference>
<dbReference type="PROSITE" id="PS00178">
    <property type="entry name" value="AA_TRNA_LIGASE_I"/>
    <property type="match status" value="1"/>
</dbReference>
<proteinExistence type="inferred from homology"/>
<organism>
    <name type="scientific">Lactobacillus delbrueckii subsp. bulgaricus (strain ATCC 11842 / DSM 20081 / BCRC 10696 / JCM 1002 / NBRC 13953 / NCIMB 11778 / NCTC 12712 / WDCM 00102 / Lb 14)</name>
    <dbReference type="NCBI Taxonomy" id="390333"/>
    <lineage>
        <taxon>Bacteria</taxon>
        <taxon>Bacillati</taxon>
        <taxon>Bacillota</taxon>
        <taxon>Bacilli</taxon>
        <taxon>Lactobacillales</taxon>
        <taxon>Lactobacillaceae</taxon>
        <taxon>Lactobacillus</taxon>
    </lineage>
</organism>
<comment type="function">
    <text evidence="1">Catalyzes the attachment of glutamate to tRNA(Glu) in a two-step reaction: glutamate is first activated by ATP to form Glu-AMP and then transferred to the acceptor end of tRNA(Glu).</text>
</comment>
<comment type="catalytic activity">
    <reaction evidence="1">
        <text>tRNA(Glu) + L-glutamate + ATP = L-glutamyl-tRNA(Glu) + AMP + diphosphate</text>
        <dbReference type="Rhea" id="RHEA:23540"/>
        <dbReference type="Rhea" id="RHEA-COMP:9663"/>
        <dbReference type="Rhea" id="RHEA-COMP:9680"/>
        <dbReference type="ChEBI" id="CHEBI:29985"/>
        <dbReference type="ChEBI" id="CHEBI:30616"/>
        <dbReference type="ChEBI" id="CHEBI:33019"/>
        <dbReference type="ChEBI" id="CHEBI:78442"/>
        <dbReference type="ChEBI" id="CHEBI:78520"/>
        <dbReference type="ChEBI" id="CHEBI:456215"/>
        <dbReference type="EC" id="6.1.1.17"/>
    </reaction>
</comment>
<comment type="subunit">
    <text evidence="1">Monomer.</text>
</comment>
<comment type="subcellular location">
    <subcellularLocation>
        <location evidence="1">Cytoplasm</location>
    </subcellularLocation>
</comment>
<comment type="similarity">
    <text evidence="1">Belongs to the class-I aminoacyl-tRNA synthetase family. Glutamate--tRNA ligase type 1 subfamily.</text>
</comment>
<sequence>MANKKIRVRYAPSPTGHLHIGNARTALFNYLFARHNKGTLVLRIEDTDTARNVEGGAESQIENLHWLGIDWDEGPDIGGDYGPYKQSERKDIYQKYIDQLLEEGKAYYSFKTEEELEAQREEQRAMGIAPHYVYEYEGMTTDEIKQAQDEARAKGLKPVVRIHIPEGVTYEWDDIVKGHLSFESDTIGGDFVIQKRDGMPTYNFAVVIDDHLMEISHVLRGDDHISNTPKQLCVYEALGWEAPVFGHMTLIINSATGKKLSKRDESVLQFIEQYRELGFLPEAMFNFITLLGWSPVGESEIFSKREFIKQFDPARLSKSPAAFDQKKLDWVNNQYMKTADRDELLDLALHNLQEAGLVEANPAPGKMEWVRQLVNMYANQMSYTKQIVDLSKIFFTEAKYLTDEEVEEIKKDEARPAIEEFKKQLDKLDNFTAKKIMGAIMATRRETGIKGRKLFMPIRIATTRSMVGPGIGEAMELMGKDTVMKHLDLTLKQLSEAGIE</sequence>
<accession>Q1G8Y5</accession>
<gene>
    <name evidence="1" type="primary">gltX</name>
    <name type="ordered locus">Ldb1685</name>
</gene>
<evidence type="ECO:0000255" key="1">
    <source>
        <dbReference type="HAMAP-Rule" id="MF_00022"/>
    </source>
</evidence>
<protein>
    <recommendedName>
        <fullName evidence="1">Glutamate--tRNA ligase</fullName>
        <ecNumber evidence="1">6.1.1.17</ecNumber>
    </recommendedName>
    <alternativeName>
        <fullName evidence="1">Glutamyl-tRNA synthetase</fullName>
        <shortName evidence="1">GluRS</shortName>
    </alternativeName>
</protein>
<keyword id="KW-0030">Aminoacyl-tRNA synthetase</keyword>
<keyword id="KW-0067">ATP-binding</keyword>
<keyword id="KW-0963">Cytoplasm</keyword>
<keyword id="KW-0436">Ligase</keyword>
<keyword id="KW-0547">Nucleotide-binding</keyword>
<keyword id="KW-0648">Protein biosynthesis</keyword>
<keyword id="KW-1185">Reference proteome</keyword>
<name>SYE_LACDA</name>
<reference key="1">
    <citation type="journal article" date="2006" name="Proc. Natl. Acad. Sci. U.S.A.">
        <title>The complete genome sequence of Lactobacillus bulgaricus reveals extensive and ongoing reductive evolution.</title>
        <authorList>
            <person name="van de Guchte M."/>
            <person name="Penaud S."/>
            <person name="Grimaldi C."/>
            <person name="Barbe V."/>
            <person name="Bryson K."/>
            <person name="Nicolas P."/>
            <person name="Robert C."/>
            <person name="Oztas S."/>
            <person name="Mangenot S."/>
            <person name="Couloux A."/>
            <person name="Loux V."/>
            <person name="Dervyn R."/>
            <person name="Bossy R."/>
            <person name="Bolotin A."/>
            <person name="Batto J.-M."/>
            <person name="Walunas T."/>
            <person name="Gibrat J.-F."/>
            <person name="Bessieres P."/>
            <person name="Weissenbach J."/>
            <person name="Ehrlich S.D."/>
            <person name="Maguin E."/>
        </authorList>
    </citation>
    <scope>NUCLEOTIDE SEQUENCE [LARGE SCALE GENOMIC DNA]</scope>
    <source>
        <strain>ATCC 11842 / DSM 20081 / BCRC 10696 / JCM 1002 / NBRC 13953 / NCIMB 11778 / NCTC 12712 / WDCM 00102 / Lb 14</strain>
    </source>
</reference>
<feature type="chain" id="PRO_1000001912" description="Glutamate--tRNA ligase">
    <location>
        <begin position="1"/>
        <end position="500"/>
    </location>
</feature>
<feature type="short sequence motif" description="'HIGH' region" evidence="1">
    <location>
        <begin position="12"/>
        <end position="22"/>
    </location>
</feature>
<feature type="short sequence motif" description="'KMSKS' region" evidence="1">
    <location>
        <begin position="259"/>
        <end position="263"/>
    </location>
</feature>
<feature type="binding site" evidence="1">
    <location>
        <position position="262"/>
    </location>
    <ligand>
        <name>ATP</name>
        <dbReference type="ChEBI" id="CHEBI:30616"/>
    </ligand>
</feature>